<sequence length="431" mass="46659">MAGQTVIVSGLNPAAILQSTIGGATPAPAAENDHTRKVVPLSRDALQDFMVSIITQKLQDEKQPFYVLDLGEVVSLMDQWNAGLPNIRPFYAVKCNPEPSFLSMLSAMGSNFDCASRAEIEYVLSLGISPDRIVFANPCKPESDIIFAAKVGVNLTTFDSEDEVYKIRKHHPKCELLLRIKPMDDGNARCPMGPKYGALPEEVEPLLRTAQAARLTVSGVSFHIGSGDADSKAYLGAIAAAKGVFETAARFGMSKMTVLDIGGGFTSGHQFTTASAAVRSALEQHFHDEQELTIIAEPGRFFAETAFTLATTIIGKRVRGELREYWINDGLYGSMNCVLYDHATVNATPLACMSNRSNLNCGGSKTFPSTVFGPTCDALDTVLRDYQLPELQVNDWLIFPNMGAYTKAAGSNFNGFNTSAIVTHLAYAYPS</sequence>
<evidence type="ECO:0000250" key="1">
    <source>
        <dbReference type="UniProtKB" id="P00860"/>
    </source>
</evidence>
<evidence type="ECO:0000250" key="2">
    <source>
        <dbReference type="UniProtKB" id="P07805"/>
    </source>
</evidence>
<evidence type="ECO:0000250" key="3">
    <source>
        <dbReference type="UniProtKB" id="P11926"/>
    </source>
</evidence>
<evidence type="ECO:0000305" key="4"/>
<name>DCOR_DATST</name>
<proteinExistence type="evidence at transcript level"/>
<organism>
    <name type="scientific">Datura stramonium</name>
    <name type="common">Jimsonweed</name>
    <name type="synonym">Common thornapple</name>
    <dbReference type="NCBI Taxonomy" id="4076"/>
    <lineage>
        <taxon>Eukaryota</taxon>
        <taxon>Viridiplantae</taxon>
        <taxon>Streptophyta</taxon>
        <taxon>Embryophyta</taxon>
        <taxon>Tracheophyta</taxon>
        <taxon>Spermatophyta</taxon>
        <taxon>Magnoliopsida</taxon>
        <taxon>eudicotyledons</taxon>
        <taxon>Gunneridae</taxon>
        <taxon>Pentapetalae</taxon>
        <taxon>asterids</taxon>
        <taxon>lamiids</taxon>
        <taxon>Solanales</taxon>
        <taxon>Solanaceae</taxon>
        <taxon>Solanoideae</taxon>
        <taxon>Datureae</taxon>
        <taxon>Datura</taxon>
    </lineage>
</organism>
<feature type="chain" id="PRO_0000149904" description="Ornithine decarboxylase">
    <location>
        <begin position="1"/>
        <end position="431"/>
    </location>
</feature>
<feature type="active site" description="Proton donor; shared with dimeric partner" evidence="3">
    <location>
        <position position="376"/>
    </location>
</feature>
<feature type="binding site" evidence="3">
    <location>
        <position position="226"/>
    </location>
    <ligand>
        <name>pyridoxal 5'-phosphate</name>
        <dbReference type="ChEBI" id="CHEBI:597326"/>
    </ligand>
</feature>
<feature type="binding site" evidence="3">
    <location>
        <position position="264"/>
    </location>
    <ligand>
        <name>pyridoxal 5'-phosphate</name>
        <dbReference type="ChEBI" id="CHEBI:597326"/>
    </ligand>
</feature>
<feature type="binding site" evidence="3">
    <location>
        <begin position="297"/>
        <end position="300"/>
    </location>
    <ligand>
        <name>pyridoxal 5'-phosphate</name>
        <dbReference type="ChEBI" id="CHEBI:597326"/>
    </ligand>
</feature>
<feature type="binding site" description="in other chain" evidence="2">
    <location>
        <begin position="340"/>
        <end position="341"/>
    </location>
    <ligand>
        <name>substrate</name>
        <note>ligand shared between dimeric partners</note>
    </ligand>
</feature>
<feature type="binding site" evidence="2">
    <location>
        <position position="377"/>
    </location>
    <ligand>
        <name>substrate</name>
        <note>ligand shared between dimeric partners</note>
    </ligand>
</feature>
<feature type="binding site" evidence="3">
    <location>
        <position position="405"/>
    </location>
    <ligand>
        <name>pyridoxal 5'-phosphate</name>
        <dbReference type="ChEBI" id="CHEBI:597326"/>
    </ligand>
</feature>
<feature type="site" description="Stacks against the aromatic ring of pyridoxal phosphate and stabilizes reaction intermediates" evidence="1">
    <location>
        <position position="223"/>
    </location>
</feature>
<feature type="modified residue" description="N6-(pyridoxal phosphate)lysine" evidence="3">
    <location>
        <position position="94"/>
    </location>
</feature>
<reference key="1">
    <citation type="journal article" date="1996" name="Biochem. J.">
        <title>Molecular cloning and functional identification of a plant ornithine decarboxylase cDNA.</title>
        <authorList>
            <person name="Michael A.J."/>
            <person name="Furze J.M."/>
            <person name="Rhodes M.J.C."/>
            <person name="Burtin D."/>
        </authorList>
    </citation>
    <scope>NUCLEOTIDE SEQUENCE [MRNA]</scope>
    <source>
        <strain>cv. D15/5</strain>
        <tissue>Root</tissue>
    </source>
</reference>
<protein>
    <recommendedName>
        <fullName>Ornithine decarboxylase</fullName>
        <shortName>ODC</shortName>
        <ecNumber>4.1.1.17</ecNumber>
    </recommendedName>
</protein>
<dbReference type="EC" id="4.1.1.17"/>
<dbReference type="EMBL" id="X87847">
    <property type="protein sequence ID" value="CAA61121.1"/>
    <property type="molecule type" value="mRNA"/>
</dbReference>
<dbReference type="PIR" id="S64704">
    <property type="entry name" value="S64704"/>
</dbReference>
<dbReference type="SMR" id="P50134"/>
<dbReference type="BioCyc" id="MetaCyc:MONOMER-14990"/>
<dbReference type="UniPathway" id="UPA00535">
    <property type="reaction ID" value="UER00288"/>
</dbReference>
<dbReference type="GO" id="GO:0005737">
    <property type="term" value="C:cytoplasm"/>
    <property type="evidence" value="ECO:0007669"/>
    <property type="project" value="TreeGrafter"/>
</dbReference>
<dbReference type="GO" id="GO:0004586">
    <property type="term" value="F:ornithine decarboxylase activity"/>
    <property type="evidence" value="ECO:0007669"/>
    <property type="project" value="UniProtKB-EC"/>
</dbReference>
<dbReference type="GO" id="GO:0033387">
    <property type="term" value="P:putrescine biosynthetic process from arginine, via ornithine"/>
    <property type="evidence" value="ECO:0007669"/>
    <property type="project" value="UniProtKB-UniPathway"/>
</dbReference>
<dbReference type="CDD" id="cd00622">
    <property type="entry name" value="PLPDE_III_ODC"/>
    <property type="match status" value="1"/>
</dbReference>
<dbReference type="FunFam" id="2.40.37.10:FF:000014">
    <property type="entry name" value="Ornithine decarboxylase"/>
    <property type="match status" value="1"/>
</dbReference>
<dbReference type="FunFam" id="3.20.20.10:FF:000005">
    <property type="entry name" value="Ornithine decarboxylase"/>
    <property type="match status" value="1"/>
</dbReference>
<dbReference type="Gene3D" id="3.20.20.10">
    <property type="entry name" value="Alanine racemase"/>
    <property type="match status" value="1"/>
</dbReference>
<dbReference type="Gene3D" id="2.40.37.10">
    <property type="entry name" value="Lyase, Ornithine Decarboxylase, Chain A, domain 1"/>
    <property type="match status" value="1"/>
</dbReference>
<dbReference type="InterPro" id="IPR009006">
    <property type="entry name" value="Ala_racemase/Decarboxylase_C"/>
</dbReference>
<dbReference type="InterPro" id="IPR022643">
    <property type="entry name" value="De-COase2_C"/>
</dbReference>
<dbReference type="InterPro" id="IPR022657">
    <property type="entry name" value="De-COase2_CS"/>
</dbReference>
<dbReference type="InterPro" id="IPR022644">
    <property type="entry name" value="De-COase2_N"/>
</dbReference>
<dbReference type="InterPro" id="IPR022653">
    <property type="entry name" value="De-COase2_pyr-phos_BS"/>
</dbReference>
<dbReference type="InterPro" id="IPR000183">
    <property type="entry name" value="Orn/DAP/Arg_de-COase"/>
</dbReference>
<dbReference type="InterPro" id="IPR002433">
    <property type="entry name" value="Orn_de-COase"/>
</dbReference>
<dbReference type="InterPro" id="IPR029066">
    <property type="entry name" value="PLP-binding_barrel"/>
</dbReference>
<dbReference type="PANTHER" id="PTHR11482">
    <property type="entry name" value="ARGININE/DIAMINOPIMELATE/ORNITHINE DECARBOXYLASE"/>
    <property type="match status" value="1"/>
</dbReference>
<dbReference type="PANTHER" id="PTHR11482:SF6">
    <property type="entry name" value="ORNITHINE DECARBOXYLASE 1-RELATED"/>
    <property type="match status" value="1"/>
</dbReference>
<dbReference type="Pfam" id="PF02784">
    <property type="entry name" value="Orn_Arg_deC_N"/>
    <property type="match status" value="1"/>
</dbReference>
<dbReference type="Pfam" id="PF00278">
    <property type="entry name" value="Orn_DAP_Arg_deC"/>
    <property type="match status" value="1"/>
</dbReference>
<dbReference type="PRINTS" id="PR01179">
    <property type="entry name" value="ODADCRBXLASE"/>
</dbReference>
<dbReference type="PRINTS" id="PR01182">
    <property type="entry name" value="ORNDCRBXLASE"/>
</dbReference>
<dbReference type="SUPFAM" id="SSF50621">
    <property type="entry name" value="Alanine racemase C-terminal domain-like"/>
    <property type="match status" value="1"/>
</dbReference>
<dbReference type="SUPFAM" id="SSF51419">
    <property type="entry name" value="PLP-binding barrel"/>
    <property type="match status" value="1"/>
</dbReference>
<dbReference type="PROSITE" id="PS00878">
    <property type="entry name" value="ODR_DC_2_1"/>
    <property type="match status" value="1"/>
</dbReference>
<dbReference type="PROSITE" id="PS00879">
    <property type="entry name" value="ODR_DC_2_2"/>
    <property type="match status" value="1"/>
</dbReference>
<accession>P50134</accession>
<comment type="function">
    <text evidence="3">Catalyzes the first and rate-limiting step of polyamine biosynthesis that converts ornithine into putrescine, which is the precursor for the polyamines, spermidine and spermine. Polyamines are essential for cell proliferation and are implicated in cellular processes, ranging from DNA replication to apoptosis.</text>
</comment>
<comment type="catalytic activity">
    <reaction evidence="3">
        <text>L-ornithine + H(+) = putrescine + CO2</text>
        <dbReference type="Rhea" id="RHEA:22964"/>
        <dbReference type="ChEBI" id="CHEBI:15378"/>
        <dbReference type="ChEBI" id="CHEBI:16526"/>
        <dbReference type="ChEBI" id="CHEBI:46911"/>
        <dbReference type="ChEBI" id="CHEBI:326268"/>
        <dbReference type="EC" id="4.1.1.17"/>
    </reaction>
</comment>
<comment type="cofactor">
    <cofactor evidence="3">
        <name>pyridoxal 5'-phosphate</name>
        <dbReference type="ChEBI" id="CHEBI:597326"/>
    </cofactor>
</comment>
<comment type="activity regulation">
    <text evidence="3">Inhibited by antizyme (AZ) in response to polyamine levels. AZ inhibits the assembly of the functional homodimer by binding to ODC monomers and targeting them for ubiquitin-independent proteolytic destruction by the 26S proteasome.</text>
</comment>
<comment type="pathway">
    <text>Amine and polyamine biosynthesis; putrescine biosynthesis via L-ornithine pathway; putrescine from L-ornithine: step 1/1.</text>
</comment>
<comment type="subunit">
    <text evidence="3">Homodimer. Only the dimer is catalytically active, as the active sites are constructed of residues from both monomers.</text>
</comment>
<comment type="similarity">
    <text evidence="4">Belongs to the Orn/Lys/Arg decarboxylase class-II family.</text>
</comment>
<keyword id="KW-0210">Decarboxylase</keyword>
<keyword id="KW-0456">Lyase</keyword>
<keyword id="KW-0620">Polyamine biosynthesis</keyword>
<keyword id="KW-0663">Pyridoxal phosphate</keyword>